<protein>
    <recommendedName>
        <fullName evidence="1">Small ribosomal subunit protein bS20</fullName>
    </recommendedName>
    <alternativeName>
        <fullName evidence="2">30S ribosomal protein S20</fullName>
    </alternativeName>
</protein>
<organism>
    <name type="scientific">Lactococcus lactis subsp. cremoris (strain SK11)</name>
    <dbReference type="NCBI Taxonomy" id="272622"/>
    <lineage>
        <taxon>Bacteria</taxon>
        <taxon>Bacillati</taxon>
        <taxon>Bacillota</taxon>
        <taxon>Bacilli</taxon>
        <taxon>Lactobacillales</taxon>
        <taxon>Streptococcaceae</taxon>
        <taxon>Lactococcus</taxon>
        <taxon>Lactococcus cremoris subsp. cremoris</taxon>
    </lineage>
</organism>
<reference key="1">
    <citation type="journal article" date="2006" name="Proc. Natl. Acad. Sci. U.S.A.">
        <title>Comparative genomics of the lactic acid bacteria.</title>
        <authorList>
            <person name="Makarova K.S."/>
            <person name="Slesarev A."/>
            <person name="Wolf Y.I."/>
            <person name="Sorokin A."/>
            <person name="Mirkin B."/>
            <person name="Koonin E.V."/>
            <person name="Pavlov A."/>
            <person name="Pavlova N."/>
            <person name="Karamychev V."/>
            <person name="Polouchine N."/>
            <person name="Shakhova V."/>
            <person name="Grigoriev I."/>
            <person name="Lou Y."/>
            <person name="Rohksar D."/>
            <person name="Lucas S."/>
            <person name="Huang K."/>
            <person name="Goodstein D.M."/>
            <person name="Hawkins T."/>
            <person name="Plengvidhya V."/>
            <person name="Welker D."/>
            <person name="Hughes J."/>
            <person name="Goh Y."/>
            <person name="Benson A."/>
            <person name="Baldwin K."/>
            <person name="Lee J.-H."/>
            <person name="Diaz-Muniz I."/>
            <person name="Dosti B."/>
            <person name="Smeianov V."/>
            <person name="Wechter W."/>
            <person name="Barabote R."/>
            <person name="Lorca G."/>
            <person name="Altermann E."/>
            <person name="Barrangou R."/>
            <person name="Ganesan B."/>
            <person name="Xie Y."/>
            <person name="Rawsthorne H."/>
            <person name="Tamir D."/>
            <person name="Parker C."/>
            <person name="Breidt F."/>
            <person name="Broadbent J.R."/>
            <person name="Hutkins R."/>
            <person name="O'Sullivan D."/>
            <person name="Steele J."/>
            <person name="Unlu G."/>
            <person name="Saier M.H. Jr."/>
            <person name="Klaenhammer T."/>
            <person name="Richardson P."/>
            <person name="Kozyavkin S."/>
            <person name="Weimer B.C."/>
            <person name="Mills D.A."/>
        </authorList>
    </citation>
    <scope>NUCLEOTIDE SEQUENCE [LARGE SCALE GENOMIC DNA]</scope>
    <source>
        <strain>SK11</strain>
    </source>
</reference>
<name>RS20_LACLS</name>
<keyword id="KW-0687">Ribonucleoprotein</keyword>
<keyword id="KW-0689">Ribosomal protein</keyword>
<keyword id="KW-0694">RNA-binding</keyword>
<keyword id="KW-0699">rRNA-binding</keyword>
<proteinExistence type="inferred from homology"/>
<sequence>MANIKSAIKRAELNKIANERNAQQKSAMRTLIKKFEAAPSEELYRAASSTIDKAASKGLIHANKASRDKARLAAKLG</sequence>
<feature type="chain" id="PRO_1000126466" description="Small ribosomal subunit protein bS20">
    <location>
        <begin position="1"/>
        <end position="77"/>
    </location>
</feature>
<dbReference type="EMBL" id="CP000425">
    <property type="protein sequence ID" value="ABJ73386.1"/>
    <property type="molecule type" value="Genomic_DNA"/>
</dbReference>
<dbReference type="RefSeq" id="WP_011676734.1">
    <property type="nucleotide sequence ID" value="NC_008527.1"/>
</dbReference>
<dbReference type="SMR" id="Q02XD6"/>
<dbReference type="GeneID" id="61109999"/>
<dbReference type="KEGG" id="llc:LACR_1902"/>
<dbReference type="HOGENOM" id="CLU_160655_1_1_9"/>
<dbReference type="Proteomes" id="UP000000240">
    <property type="component" value="Chromosome"/>
</dbReference>
<dbReference type="GO" id="GO:0005829">
    <property type="term" value="C:cytosol"/>
    <property type="evidence" value="ECO:0007669"/>
    <property type="project" value="TreeGrafter"/>
</dbReference>
<dbReference type="GO" id="GO:0015935">
    <property type="term" value="C:small ribosomal subunit"/>
    <property type="evidence" value="ECO:0007669"/>
    <property type="project" value="TreeGrafter"/>
</dbReference>
<dbReference type="GO" id="GO:0070181">
    <property type="term" value="F:small ribosomal subunit rRNA binding"/>
    <property type="evidence" value="ECO:0007669"/>
    <property type="project" value="TreeGrafter"/>
</dbReference>
<dbReference type="GO" id="GO:0003735">
    <property type="term" value="F:structural constituent of ribosome"/>
    <property type="evidence" value="ECO:0007669"/>
    <property type="project" value="InterPro"/>
</dbReference>
<dbReference type="GO" id="GO:0006412">
    <property type="term" value="P:translation"/>
    <property type="evidence" value="ECO:0007669"/>
    <property type="project" value="UniProtKB-UniRule"/>
</dbReference>
<dbReference type="FunFam" id="1.20.58.110:FF:000001">
    <property type="entry name" value="30S ribosomal protein S20"/>
    <property type="match status" value="1"/>
</dbReference>
<dbReference type="Gene3D" id="1.20.58.110">
    <property type="entry name" value="Ribosomal protein S20"/>
    <property type="match status" value="1"/>
</dbReference>
<dbReference type="HAMAP" id="MF_00500">
    <property type="entry name" value="Ribosomal_bS20"/>
    <property type="match status" value="1"/>
</dbReference>
<dbReference type="InterPro" id="IPR002583">
    <property type="entry name" value="Ribosomal_bS20"/>
</dbReference>
<dbReference type="InterPro" id="IPR036510">
    <property type="entry name" value="Ribosomal_bS20_sf"/>
</dbReference>
<dbReference type="NCBIfam" id="TIGR00029">
    <property type="entry name" value="S20"/>
    <property type="match status" value="1"/>
</dbReference>
<dbReference type="PANTHER" id="PTHR33398">
    <property type="entry name" value="30S RIBOSOMAL PROTEIN S20"/>
    <property type="match status" value="1"/>
</dbReference>
<dbReference type="PANTHER" id="PTHR33398:SF1">
    <property type="entry name" value="SMALL RIBOSOMAL SUBUNIT PROTEIN BS20C"/>
    <property type="match status" value="1"/>
</dbReference>
<dbReference type="Pfam" id="PF01649">
    <property type="entry name" value="Ribosomal_S20p"/>
    <property type="match status" value="1"/>
</dbReference>
<dbReference type="SUPFAM" id="SSF46992">
    <property type="entry name" value="Ribosomal protein S20"/>
    <property type="match status" value="1"/>
</dbReference>
<evidence type="ECO:0000255" key="1">
    <source>
        <dbReference type="HAMAP-Rule" id="MF_00500"/>
    </source>
</evidence>
<evidence type="ECO:0000305" key="2"/>
<comment type="function">
    <text evidence="1">Binds directly to 16S ribosomal RNA.</text>
</comment>
<comment type="similarity">
    <text evidence="1">Belongs to the bacterial ribosomal protein bS20 family.</text>
</comment>
<accession>Q02XD6</accession>
<gene>
    <name evidence="1" type="primary">rpsT</name>
    <name type="ordered locus">LACR_1902</name>
</gene>